<feature type="chain" id="PRO_0000096099" description="Single-stranded DNA-binding protein 1">
    <location>
        <begin position="1"/>
        <end position="167"/>
    </location>
</feature>
<feature type="domain" description="SSB" evidence="1">
    <location>
        <begin position="1"/>
        <end position="104"/>
    </location>
</feature>
<feature type="region of interest" description="Disordered" evidence="2">
    <location>
        <begin position="107"/>
        <end position="167"/>
    </location>
</feature>
<feature type="short sequence motif" description="Important for interaction with partner proteins" evidence="1">
    <location>
        <begin position="162"/>
        <end position="167"/>
    </location>
</feature>
<feature type="compositionally biased region" description="Low complexity" evidence="2">
    <location>
        <begin position="109"/>
        <end position="118"/>
    </location>
</feature>
<feature type="compositionally biased region" description="Low complexity" evidence="2">
    <location>
        <begin position="132"/>
        <end position="147"/>
    </location>
</feature>
<gene>
    <name type="primary">ssb</name>
    <name type="ordered locus">SACOL0438</name>
</gene>
<organism>
    <name type="scientific">Staphylococcus aureus (strain COL)</name>
    <dbReference type="NCBI Taxonomy" id="93062"/>
    <lineage>
        <taxon>Bacteria</taxon>
        <taxon>Bacillati</taxon>
        <taxon>Bacillota</taxon>
        <taxon>Bacilli</taxon>
        <taxon>Bacillales</taxon>
        <taxon>Staphylococcaceae</taxon>
        <taxon>Staphylococcus</taxon>
    </lineage>
</organism>
<comment type="function">
    <text evidence="1">Plays an important role in DNA replication, recombination and repair. Binds to ssDNA and to an array of partner proteins to recruit them to their sites of action during DNA metabolism.</text>
</comment>
<comment type="subunit">
    <text evidence="1">Homotetramer.</text>
</comment>
<protein>
    <recommendedName>
        <fullName evidence="1">Single-stranded DNA-binding protein 1</fullName>
        <shortName evidence="1">SSB 1</shortName>
    </recommendedName>
</protein>
<keyword id="KW-0227">DNA damage</keyword>
<keyword id="KW-0233">DNA recombination</keyword>
<keyword id="KW-0234">DNA repair</keyword>
<keyword id="KW-0235">DNA replication</keyword>
<keyword id="KW-0238">DNA-binding</keyword>
<sequence length="167" mass="18539">MLNRVVLVGRLTKDPEYRTTPSGVSVATFTLAVNRTFTNAQGEREADFINCVVFRRQADNVNNYLSKGSLAGVDGRLQSRNYENQEGRRVFVTEVVCDSVQFLEPKNAQQNGGQRQQNEFQDYGQGFGGQQSGQNNSYNNSSNTKQSDNPFANANGPIDISDDDLPF</sequence>
<accession>Q5HIS8</accession>
<proteinExistence type="inferred from homology"/>
<dbReference type="EMBL" id="CP000046">
    <property type="protein sequence ID" value="AAW38906.1"/>
    <property type="molecule type" value="Genomic_DNA"/>
</dbReference>
<dbReference type="RefSeq" id="WP_000934799.1">
    <property type="nucleotide sequence ID" value="NZ_JBGOFO010000001.1"/>
</dbReference>
<dbReference type="SMR" id="Q5HIS8"/>
<dbReference type="GeneID" id="98344692"/>
<dbReference type="KEGG" id="sac:SACOL0438"/>
<dbReference type="HOGENOM" id="CLU_078758_6_2_9"/>
<dbReference type="Proteomes" id="UP000000530">
    <property type="component" value="Chromosome"/>
</dbReference>
<dbReference type="GO" id="GO:0009295">
    <property type="term" value="C:nucleoid"/>
    <property type="evidence" value="ECO:0007669"/>
    <property type="project" value="TreeGrafter"/>
</dbReference>
<dbReference type="GO" id="GO:0003697">
    <property type="term" value="F:single-stranded DNA binding"/>
    <property type="evidence" value="ECO:0007669"/>
    <property type="project" value="UniProtKB-UniRule"/>
</dbReference>
<dbReference type="GO" id="GO:0006310">
    <property type="term" value="P:DNA recombination"/>
    <property type="evidence" value="ECO:0007669"/>
    <property type="project" value="UniProtKB-UniRule"/>
</dbReference>
<dbReference type="GO" id="GO:0006281">
    <property type="term" value="P:DNA repair"/>
    <property type="evidence" value="ECO:0007669"/>
    <property type="project" value="UniProtKB-UniRule"/>
</dbReference>
<dbReference type="GO" id="GO:0006260">
    <property type="term" value="P:DNA replication"/>
    <property type="evidence" value="ECO:0007669"/>
    <property type="project" value="UniProtKB-UniRule"/>
</dbReference>
<dbReference type="CDD" id="cd04496">
    <property type="entry name" value="SSB_OBF"/>
    <property type="match status" value="1"/>
</dbReference>
<dbReference type="FunFam" id="2.40.50.140:FF:000084">
    <property type="entry name" value="Single-stranded DNA-binding protein"/>
    <property type="match status" value="1"/>
</dbReference>
<dbReference type="Gene3D" id="2.40.50.140">
    <property type="entry name" value="Nucleic acid-binding proteins"/>
    <property type="match status" value="1"/>
</dbReference>
<dbReference type="HAMAP" id="MF_00984">
    <property type="entry name" value="SSB"/>
    <property type="match status" value="1"/>
</dbReference>
<dbReference type="InterPro" id="IPR012340">
    <property type="entry name" value="NA-bd_OB-fold"/>
</dbReference>
<dbReference type="InterPro" id="IPR000424">
    <property type="entry name" value="Primosome_PriB/ssb"/>
</dbReference>
<dbReference type="InterPro" id="IPR011344">
    <property type="entry name" value="ssDNA-bd"/>
</dbReference>
<dbReference type="NCBIfam" id="TIGR00621">
    <property type="entry name" value="ssb"/>
    <property type="match status" value="1"/>
</dbReference>
<dbReference type="PANTHER" id="PTHR10302">
    <property type="entry name" value="SINGLE-STRANDED DNA-BINDING PROTEIN"/>
    <property type="match status" value="1"/>
</dbReference>
<dbReference type="PANTHER" id="PTHR10302:SF27">
    <property type="entry name" value="SINGLE-STRANDED DNA-BINDING PROTEIN"/>
    <property type="match status" value="1"/>
</dbReference>
<dbReference type="Pfam" id="PF00436">
    <property type="entry name" value="SSB"/>
    <property type="match status" value="1"/>
</dbReference>
<dbReference type="PIRSF" id="PIRSF002070">
    <property type="entry name" value="SSB"/>
    <property type="match status" value="1"/>
</dbReference>
<dbReference type="SUPFAM" id="SSF50249">
    <property type="entry name" value="Nucleic acid-binding proteins"/>
    <property type="match status" value="1"/>
</dbReference>
<dbReference type="PROSITE" id="PS50935">
    <property type="entry name" value="SSB"/>
    <property type="match status" value="1"/>
</dbReference>
<evidence type="ECO:0000255" key="1">
    <source>
        <dbReference type="HAMAP-Rule" id="MF_00984"/>
    </source>
</evidence>
<evidence type="ECO:0000256" key="2">
    <source>
        <dbReference type="SAM" id="MobiDB-lite"/>
    </source>
</evidence>
<reference key="1">
    <citation type="journal article" date="2005" name="J. Bacteriol.">
        <title>Insights on evolution of virulence and resistance from the complete genome analysis of an early methicillin-resistant Staphylococcus aureus strain and a biofilm-producing methicillin-resistant Staphylococcus epidermidis strain.</title>
        <authorList>
            <person name="Gill S.R."/>
            <person name="Fouts D.E."/>
            <person name="Archer G.L."/>
            <person name="Mongodin E.F."/>
            <person name="DeBoy R.T."/>
            <person name="Ravel J."/>
            <person name="Paulsen I.T."/>
            <person name="Kolonay J.F."/>
            <person name="Brinkac L.M."/>
            <person name="Beanan M.J."/>
            <person name="Dodson R.J."/>
            <person name="Daugherty S.C."/>
            <person name="Madupu R."/>
            <person name="Angiuoli S.V."/>
            <person name="Durkin A.S."/>
            <person name="Haft D.H."/>
            <person name="Vamathevan J.J."/>
            <person name="Khouri H."/>
            <person name="Utterback T.R."/>
            <person name="Lee C."/>
            <person name="Dimitrov G."/>
            <person name="Jiang L."/>
            <person name="Qin H."/>
            <person name="Weidman J."/>
            <person name="Tran K."/>
            <person name="Kang K.H."/>
            <person name="Hance I.R."/>
            <person name="Nelson K.E."/>
            <person name="Fraser C.M."/>
        </authorList>
    </citation>
    <scope>NUCLEOTIDE SEQUENCE [LARGE SCALE GENOMIC DNA]</scope>
    <source>
        <strain>COL</strain>
    </source>
</reference>
<name>SSB1_STAAC</name>